<reference key="1">
    <citation type="journal article" date="2008" name="Genomics">
        <title>Characterization of ST-4821 complex, a unique Neisseria meningitidis clone.</title>
        <authorList>
            <person name="Peng J."/>
            <person name="Yang L."/>
            <person name="Yang F."/>
            <person name="Yang J."/>
            <person name="Yan Y."/>
            <person name="Nie H."/>
            <person name="Zhang X."/>
            <person name="Xiong Z."/>
            <person name="Jiang Y."/>
            <person name="Cheng F."/>
            <person name="Xu X."/>
            <person name="Chen S."/>
            <person name="Sun L."/>
            <person name="Li W."/>
            <person name="Shen Y."/>
            <person name="Shao Z."/>
            <person name="Liang X."/>
            <person name="Xu J."/>
            <person name="Jin Q."/>
        </authorList>
    </citation>
    <scope>NUCLEOTIDE SEQUENCE [LARGE SCALE GENOMIC DNA]</scope>
    <source>
        <strain>053442</strain>
    </source>
</reference>
<accession>A9M4E0</accession>
<name>RL362_NEIM0</name>
<feature type="chain" id="PRO_0000344695" description="Large ribosomal subunit protein bL36B">
    <location>
        <begin position="1"/>
        <end position="41"/>
    </location>
</feature>
<sequence>MQVLSSLKTAKQRHRDCQIVRRKGKVYVICKSNPRFKARQR</sequence>
<protein>
    <recommendedName>
        <fullName evidence="1">Large ribosomal subunit protein bL36B</fullName>
    </recommendedName>
    <alternativeName>
        <fullName evidence="2">50S ribosomal protein L36 2</fullName>
    </alternativeName>
</protein>
<organism>
    <name type="scientific">Neisseria meningitidis serogroup C (strain 053442)</name>
    <dbReference type="NCBI Taxonomy" id="374833"/>
    <lineage>
        <taxon>Bacteria</taxon>
        <taxon>Pseudomonadati</taxon>
        <taxon>Pseudomonadota</taxon>
        <taxon>Betaproteobacteria</taxon>
        <taxon>Neisseriales</taxon>
        <taxon>Neisseriaceae</taxon>
        <taxon>Neisseria</taxon>
    </lineage>
</organism>
<gene>
    <name evidence="1" type="primary">rpmJ2</name>
    <name type="ordered locus">NMCC_0884</name>
</gene>
<proteinExistence type="inferred from homology"/>
<comment type="similarity">
    <text evidence="1">Belongs to the bacterial ribosomal protein bL36 family.</text>
</comment>
<dbReference type="EMBL" id="CP000381">
    <property type="protein sequence ID" value="ABX73066.1"/>
    <property type="molecule type" value="Genomic_DNA"/>
</dbReference>
<dbReference type="SMR" id="A9M4E0"/>
<dbReference type="KEGG" id="nmn:NMCC_0884"/>
<dbReference type="HOGENOM" id="CLU_135723_3_3_4"/>
<dbReference type="Proteomes" id="UP000001177">
    <property type="component" value="Chromosome"/>
</dbReference>
<dbReference type="GO" id="GO:1990904">
    <property type="term" value="C:ribonucleoprotein complex"/>
    <property type="evidence" value="ECO:0007669"/>
    <property type="project" value="UniProtKB-KW"/>
</dbReference>
<dbReference type="GO" id="GO:0005840">
    <property type="term" value="C:ribosome"/>
    <property type="evidence" value="ECO:0007669"/>
    <property type="project" value="UniProtKB-KW"/>
</dbReference>
<dbReference type="GO" id="GO:0003735">
    <property type="term" value="F:structural constituent of ribosome"/>
    <property type="evidence" value="ECO:0007669"/>
    <property type="project" value="InterPro"/>
</dbReference>
<dbReference type="GO" id="GO:0006412">
    <property type="term" value="P:translation"/>
    <property type="evidence" value="ECO:0007669"/>
    <property type="project" value="UniProtKB-UniRule"/>
</dbReference>
<dbReference type="HAMAP" id="MF_00251">
    <property type="entry name" value="Ribosomal_bL36"/>
    <property type="match status" value="1"/>
</dbReference>
<dbReference type="InterPro" id="IPR000473">
    <property type="entry name" value="Ribosomal_bL36"/>
</dbReference>
<dbReference type="InterPro" id="IPR035977">
    <property type="entry name" value="Ribosomal_bL36_sp"/>
</dbReference>
<dbReference type="InterPro" id="IPR047621">
    <property type="entry name" value="Ribosomal_L36_bact"/>
</dbReference>
<dbReference type="NCBIfam" id="NF002021">
    <property type="entry name" value="PRK00831.1"/>
    <property type="match status" value="1"/>
</dbReference>
<dbReference type="NCBIfam" id="TIGR01022">
    <property type="entry name" value="rpmJ_bact"/>
    <property type="match status" value="1"/>
</dbReference>
<dbReference type="PANTHER" id="PTHR47781">
    <property type="entry name" value="50S RIBOSOMAL PROTEIN L36 2"/>
    <property type="match status" value="1"/>
</dbReference>
<dbReference type="PANTHER" id="PTHR47781:SF1">
    <property type="entry name" value="LARGE RIBOSOMAL SUBUNIT PROTEIN BL36B"/>
    <property type="match status" value="1"/>
</dbReference>
<dbReference type="Pfam" id="PF00444">
    <property type="entry name" value="Ribosomal_L36"/>
    <property type="match status" value="1"/>
</dbReference>
<dbReference type="SUPFAM" id="SSF57840">
    <property type="entry name" value="Ribosomal protein L36"/>
    <property type="match status" value="1"/>
</dbReference>
<dbReference type="PROSITE" id="PS00828">
    <property type="entry name" value="RIBOSOMAL_L36"/>
    <property type="match status" value="1"/>
</dbReference>
<keyword id="KW-0687">Ribonucleoprotein</keyword>
<keyword id="KW-0689">Ribosomal protein</keyword>
<evidence type="ECO:0000255" key="1">
    <source>
        <dbReference type="HAMAP-Rule" id="MF_00251"/>
    </source>
</evidence>
<evidence type="ECO:0000305" key="2"/>